<reference key="1">
    <citation type="submission" date="2009-01" db="EMBL/GenBank/DDBJ databases">
        <title>Complete sequence of chromosome of Caldicellulosiruptor becscii DSM 6725.</title>
        <authorList>
            <person name="Lucas S."/>
            <person name="Copeland A."/>
            <person name="Lapidus A."/>
            <person name="Glavina del Rio T."/>
            <person name="Tice H."/>
            <person name="Bruce D."/>
            <person name="Goodwin L."/>
            <person name="Pitluck S."/>
            <person name="Sims D."/>
            <person name="Meincke L."/>
            <person name="Brettin T."/>
            <person name="Detter J.C."/>
            <person name="Han C."/>
            <person name="Larimer F."/>
            <person name="Land M."/>
            <person name="Hauser L."/>
            <person name="Kyrpides N."/>
            <person name="Ovchinnikova G."/>
            <person name="Kataeva I."/>
            <person name="Adams M.W.W."/>
        </authorList>
    </citation>
    <scope>NUCLEOTIDE SEQUENCE [LARGE SCALE GENOMIC DNA]</scope>
    <source>
        <strain>ATCC BAA-1888 / DSM 6725 / KCTC 15123 / Z-1320</strain>
    </source>
</reference>
<keyword id="KW-0131">Cell cycle</keyword>
<keyword id="KW-0132">Cell division</keyword>
<keyword id="KW-0717">Septation</keyword>
<accession>B9MND6</accession>
<protein>
    <recommendedName>
        <fullName evidence="1">Putative septation protein SpoVG</fullName>
    </recommendedName>
</protein>
<sequence>MQVTDVRIRKITNEGRMKAIVSVTFDNCFVVHDIKIIEGQNGLFIAMPSRKTPEGEFKDIAHPINQETRDMVQKAVIEKYEAVISAGE</sequence>
<feature type="chain" id="PRO_1000148679" description="Putative septation protein SpoVG">
    <location>
        <begin position="1"/>
        <end position="88"/>
    </location>
</feature>
<comment type="function">
    <text evidence="1">Could be involved in septation.</text>
</comment>
<comment type="similarity">
    <text evidence="1">Belongs to the SpoVG family.</text>
</comment>
<organism>
    <name type="scientific">Caldicellulosiruptor bescii (strain ATCC BAA-1888 / DSM 6725 / KCTC 15123 / Z-1320)</name>
    <name type="common">Anaerocellum thermophilum</name>
    <dbReference type="NCBI Taxonomy" id="521460"/>
    <lineage>
        <taxon>Bacteria</taxon>
        <taxon>Bacillati</taxon>
        <taxon>Bacillota</taxon>
        <taxon>Bacillota incertae sedis</taxon>
        <taxon>Caldicellulosiruptorales</taxon>
        <taxon>Caldicellulosiruptoraceae</taxon>
        <taxon>Caldicellulosiruptor</taxon>
    </lineage>
</organism>
<gene>
    <name evidence="1" type="primary">spoVG</name>
    <name type="ordered locus">Athe_2399</name>
</gene>
<dbReference type="EMBL" id="CP001393">
    <property type="protein sequence ID" value="ACM61467.1"/>
    <property type="molecule type" value="Genomic_DNA"/>
</dbReference>
<dbReference type="RefSeq" id="WP_013404331.1">
    <property type="nucleotide sequence ID" value="NC_012034.1"/>
</dbReference>
<dbReference type="SMR" id="B9MND6"/>
<dbReference type="STRING" id="521460.Athe_2399"/>
<dbReference type="GeneID" id="31773750"/>
<dbReference type="KEGG" id="ate:Athe_2399"/>
<dbReference type="eggNOG" id="COG2088">
    <property type="taxonomic scope" value="Bacteria"/>
</dbReference>
<dbReference type="HOGENOM" id="CLU_103669_2_0_9"/>
<dbReference type="Proteomes" id="UP000007723">
    <property type="component" value="Chromosome"/>
</dbReference>
<dbReference type="GO" id="GO:0000917">
    <property type="term" value="P:division septum assembly"/>
    <property type="evidence" value="ECO:0007669"/>
    <property type="project" value="UniProtKB-KW"/>
</dbReference>
<dbReference type="GO" id="GO:0030435">
    <property type="term" value="P:sporulation resulting in formation of a cellular spore"/>
    <property type="evidence" value="ECO:0007669"/>
    <property type="project" value="InterPro"/>
</dbReference>
<dbReference type="Gene3D" id="3.30.1120.40">
    <property type="entry name" value="Stage V sporulation protein G"/>
    <property type="match status" value="1"/>
</dbReference>
<dbReference type="HAMAP" id="MF_00819">
    <property type="entry name" value="SpoVG"/>
    <property type="match status" value="1"/>
</dbReference>
<dbReference type="InterPro" id="IPR007170">
    <property type="entry name" value="SpoVG"/>
</dbReference>
<dbReference type="InterPro" id="IPR036751">
    <property type="entry name" value="SpoVG_sf"/>
</dbReference>
<dbReference type="NCBIfam" id="NF009749">
    <property type="entry name" value="PRK13259.1"/>
    <property type="match status" value="1"/>
</dbReference>
<dbReference type="PANTHER" id="PTHR38429">
    <property type="entry name" value="SEPTATION PROTEIN SPOVG-RELATED"/>
    <property type="match status" value="1"/>
</dbReference>
<dbReference type="PANTHER" id="PTHR38429:SF1">
    <property type="entry name" value="SEPTATION PROTEIN SPOVG-RELATED"/>
    <property type="match status" value="1"/>
</dbReference>
<dbReference type="Pfam" id="PF04026">
    <property type="entry name" value="SpoVG"/>
    <property type="match status" value="1"/>
</dbReference>
<dbReference type="SUPFAM" id="SSF160537">
    <property type="entry name" value="SpoVG-like"/>
    <property type="match status" value="1"/>
</dbReference>
<proteinExistence type="inferred from homology"/>
<name>SP5G_CALBD</name>
<evidence type="ECO:0000255" key="1">
    <source>
        <dbReference type="HAMAP-Rule" id="MF_00819"/>
    </source>
</evidence>